<evidence type="ECO:0000250" key="1">
    <source>
        <dbReference type="UniProtKB" id="P23301"/>
    </source>
</evidence>
<evidence type="ECO:0000250" key="2">
    <source>
        <dbReference type="UniProtKB" id="Q9GZV4"/>
    </source>
</evidence>
<evidence type="ECO:0000269" key="3">
    <source>
    </source>
</evidence>
<evidence type="ECO:0000305" key="4"/>
<sequence>MSDDHHDDEHFHTGDSGAAATFPKQCSALRKNEHVMIKGRPCKIVEMSTSKTGKHGHAKVHMVAIDIFTSKKLEDICPSTHNMDVPVVKRREYLLMAIDDGYCSLMDPESCEQKDDLKLPDTELGQQIRDAYEKDEGSVLVQVVSAIGEEAILGWKVSTKE</sequence>
<reference key="1">
    <citation type="journal article" date="1998" name="Science">
        <title>Genome sequence of the nematode C. elegans: a platform for investigating biology.</title>
        <authorList>
            <consortium name="The C. elegans sequencing consortium"/>
        </authorList>
    </citation>
    <scope>NUCLEOTIDE SEQUENCE [LARGE SCALE GENOMIC DNA]</scope>
    <source>
        <strain>Bristol N2</strain>
    </source>
</reference>
<reference key="2">
    <citation type="journal article" date="2004" name="Mech. Dev.">
        <title>The Caenorhabditis elegans eukaryotic initiation factor 5A homologue, IFF-1, is required for germ cell proliferation, gametogenesis and localization of the P-granule component PGL-1.</title>
        <authorList>
            <person name="Hanazawa M."/>
            <person name="Kawasaki I."/>
            <person name="Kunitomo H."/>
            <person name="Gengyo-Ando K."/>
            <person name="Bennett K.L."/>
            <person name="Mitani S."/>
            <person name="Iino Y."/>
        </authorList>
    </citation>
    <scope>FUNCTION</scope>
    <scope>TISSUE SPECIFICITY</scope>
    <scope>DEVELOPMENTAL STAGE</scope>
</reference>
<gene>
    <name type="primary">iff-2</name>
    <name type="ORF">F54C9.1</name>
</gene>
<proteinExistence type="evidence at transcript level"/>
<name>IF5A2_CAEEL</name>
<feature type="chain" id="PRO_0000142457" description="Eukaryotic translation initiation factor 5A-2">
    <location>
        <begin position="1"/>
        <end position="161"/>
    </location>
</feature>
<feature type="modified residue" description="Hypusine" evidence="2">
    <location>
        <position position="54"/>
    </location>
</feature>
<keyword id="KW-0963">Cytoplasm</keyword>
<keyword id="KW-0251">Elongation factor</keyword>
<keyword id="KW-0385">Hypusine</keyword>
<keyword id="KW-0648">Protein biosynthesis</keyword>
<keyword id="KW-1185">Reference proteome</keyword>
<keyword id="KW-0694">RNA-binding</keyword>
<organism>
    <name type="scientific">Caenorhabditis elegans</name>
    <dbReference type="NCBI Taxonomy" id="6239"/>
    <lineage>
        <taxon>Eukaryota</taxon>
        <taxon>Metazoa</taxon>
        <taxon>Ecdysozoa</taxon>
        <taxon>Nematoda</taxon>
        <taxon>Chromadorea</taxon>
        <taxon>Rhabditida</taxon>
        <taxon>Rhabditina</taxon>
        <taxon>Rhabditomorpha</taxon>
        <taxon>Rhabditoidea</taxon>
        <taxon>Rhabditidae</taxon>
        <taxon>Peloderinae</taxon>
        <taxon>Caenorhabditis</taxon>
    </lineage>
</organism>
<protein>
    <recommendedName>
        <fullName>Eukaryotic translation initiation factor 5A-2</fullName>
        <shortName>eIF-5A-2</shortName>
    </recommendedName>
    <alternativeName>
        <fullName>Initiation factor five protein 2</fullName>
    </alternativeName>
</protein>
<accession>Q20751</accession>
<dbReference type="EMBL" id="Z49967">
    <property type="protein sequence ID" value="CAA90247.1"/>
    <property type="molecule type" value="Genomic_DNA"/>
</dbReference>
<dbReference type="PIR" id="T22628">
    <property type="entry name" value="T22628"/>
</dbReference>
<dbReference type="RefSeq" id="NP_001369877.1">
    <property type="nucleotide sequence ID" value="NM_001383905.2"/>
</dbReference>
<dbReference type="RefSeq" id="NP_495807.1">
    <property type="nucleotide sequence ID" value="NM_063406.6"/>
</dbReference>
<dbReference type="SMR" id="Q20751"/>
<dbReference type="BioGRID" id="39695">
    <property type="interactions" value="55"/>
</dbReference>
<dbReference type="FunCoup" id="Q20751">
    <property type="interactions" value="1602"/>
</dbReference>
<dbReference type="STRING" id="6239.F54C9.1.2"/>
<dbReference type="PaxDb" id="6239-F54C9.1.1"/>
<dbReference type="PeptideAtlas" id="Q20751"/>
<dbReference type="EnsemblMetazoa" id="F54C9.1.1">
    <property type="protein sequence ID" value="F54C9.1.1"/>
    <property type="gene ID" value="WBGene00002065"/>
</dbReference>
<dbReference type="EnsemblMetazoa" id="F54C9.1.2">
    <property type="protein sequence ID" value="F54C9.1.2"/>
    <property type="gene ID" value="WBGene00002065"/>
</dbReference>
<dbReference type="GeneID" id="174367"/>
<dbReference type="UCSC" id="F54C9.1.1">
    <property type="organism name" value="c. elegans"/>
</dbReference>
<dbReference type="AGR" id="WB:WBGene00002065"/>
<dbReference type="WormBase" id="F54C9.1">
    <property type="protein sequence ID" value="CE02249"/>
    <property type="gene ID" value="WBGene00002065"/>
    <property type="gene designation" value="iff-2"/>
</dbReference>
<dbReference type="eggNOG" id="KOG3271">
    <property type="taxonomic scope" value="Eukaryota"/>
</dbReference>
<dbReference type="GeneTree" id="ENSGT00390000003738"/>
<dbReference type="HOGENOM" id="CLU_102600_0_0_1"/>
<dbReference type="InParanoid" id="Q20751"/>
<dbReference type="OMA" id="QIMDMET"/>
<dbReference type="OrthoDB" id="9975114at2759"/>
<dbReference type="PhylomeDB" id="Q20751"/>
<dbReference type="Reactome" id="R-CEL-204626">
    <property type="pathway name" value="Hypusine synthesis from eIF5A-lysine"/>
</dbReference>
<dbReference type="PRO" id="PR:Q20751"/>
<dbReference type="Proteomes" id="UP000001940">
    <property type="component" value="Chromosome II"/>
</dbReference>
<dbReference type="Bgee" id="WBGene00002065">
    <property type="expression patterns" value="Expressed in pharyngeal muscle cell (C elegans) and 4 other cell types or tissues"/>
</dbReference>
<dbReference type="GO" id="GO:0005737">
    <property type="term" value="C:cytoplasm"/>
    <property type="evidence" value="ECO:0007669"/>
    <property type="project" value="UniProtKB-SubCell"/>
</dbReference>
<dbReference type="GO" id="GO:0043022">
    <property type="term" value="F:ribosome binding"/>
    <property type="evidence" value="ECO:0007669"/>
    <property type="project" value="InterPro"/>
</dbReference>
<dbReference type="GO" id="GO:0003723">
    <property type="term" value="F:RNA binding"/>
    <property type="evidence" value="ECO:0007669"/>
    <property type="project" value="UniProtKB-KW"/>
</dbReference>
<dbReference type="GO" id="GO:0003746">
    <property type="term" value="F:translation elongation factor activity"/>
    <property type="evidence" value="ECO:0000318"/>
    <property type="project" value="GO_Central"/>
</dbReference>
<dbReference type="GO" id="GO:0007276">
    <property type="term" value="P:gamete generation"/>
    <property type="evidence" value="ECO:0000315"/>
    <property type="project" value="WormBase"/>
</dbReference>
<dbReference type="GO" id="GO:0035262">
    <property type="term" value="P:gonad morphogenesis"/>
    <property type="evidence" value="ECO:0000315"/>
    <property type="project" value="WormBase"/>
</dbReference>
<dbReference type="GO" id="GO:0002119">
    <property type="term" value="P:nematode larval development"/>
    <property type="evidence" value="ECO:0000315"/>
    <property type="project" value="WormBase"/>
</dbReference>
<dbReference type="GO" id="GO:0045138">
    <property type="term" value="P:nematode male tail tip morphogenesis"/>
    <property type="evidence" value="ECO:0000315"/>
    <property type="project" value="WormBase"/>
</dbReference>
<dbReference type="GO" id="GO:0045901">
    <property type="term" value="P:positive regulation of translational elongation"/>
    <property type="evidence" value="ECO:0007669"/>
    <property type="project" value="InterPro"/>
</dbReference>
<dbReference type="GO" id="GO:0045905">
    <property type="term" value="P:positive regulation of translational termination"/>
    <property type="evidence" value="ECO:0007669"/>
    <property type="project" value="InterPro"/>
</dbReference>
<dbReference type="GO" id="GO:0006414">
    <property type="term" value="P:translational elongation"/>
    <property type="evidence" value="ECO:0000318"/>
    <property type="project" value="GO_Central"/>
</dbReference>
<dbReference type="CDD" id="cd04468">
    <property type="entry name" value="S1_eIF5A"/>
    <property type="match status" value="1"/>
</dbReference>
<dbReference type="FunFam" id="2.30.30.30:FF:000007">
    <property type="entry name" value="Eukaryotic translation initiation factor 5A"/>
    <property type="match status" value="1"/>
</dbReference>
<dbReference type="FunFam" id="2.40.50.140:FF:000034">
    <property type="entry name" value="Eukaryotic translation initiation factor 5A"/>
    <property type="match status" value="1"/>
</dbReference>
<dbReference type="Gene3D" id="2.30.30.30">
    <property type="match status" value="1"/>
</dbReference>
<dbReference type="Gene3D" id="2.40.50.140">
    <property type="entry name" value="Nucleic acid-binding proteins"/>
    <property type="match status" value="1"/>
</dbReference>
<dbReference type="InterPro" id="IPR001884">
    <property type="entry name" value="IF5A-like"/>
</dbReference>
<dbReference type="InterPro" id="IPR048670">
    <property type="entry name" value="IF5A-like_N"/>
</dbReference>
<dbReference type="InterPro" id="IPR012340">
    <property type="entry name" value="NA-bd_OB-fold"/>
</dbReference>
<dbReference type="InterPro" id="IPR014722">
    <property type="entry name" value="Rib_uL2_dom2"/>
</dbReference>
<dbReference type="InterPro" id="IPR019769">
    <property type="entry name" value="Trans_elong_IF5A_hypusine_site"/>
</dbReference>
<dbReference type="InterPro" id="IPR020189">
    <property type="entry name" value="Transl_elong_IF5A_C"/>
</dbReference>
<dbReference type="InterPro" id="IPR008991">
    <property type="entry name" value="Translation_prot_SH3-like_sf"/>
</dbReference>
<dbReference type="NCBIfam" id="TIGR00037">
    <property type="entry name" value="eIF_5A"/>
    <property type="match status" value="1"/>
</dbReference>
<dbReference type="PANTHER" id="PTHR11673">
    <property type="entry name" value="TRANSLATION INITIATION FACTOR 5A FAMILY MEMBER"/>
    <property type="match status" value="1"/>
</dbReference>
<dbReference type="Pfam" id="PF01287">
    <property type="entry name" value="eIF-5a"/>
    <property type="match status" value="1"/>
</dbReference>
<dbReference type="Pfam" id="PF21485">
    <property type="entry name" value="IF5A-like_N"/>
    <property type="match status" value="1"/>
</dbReference>
<dbReference type="PIRSF" id="PIRSF003025">
    <property type="entry name" value="eIF5A"/>
    <property type="match status" value="1"/>
</dbReference>
<dbReference type="SMART" id="SM01376">
    <property type="entry name" value="eIF-5a"/>
    <property type="match status" value="1"/>
</dbReference>
<dbReference type="SUPFAM" id="SSF50249">
    <property type="entry name" value="Nucleic acid-binding proteins"/>
    <property type="match status" value="1"/>
</dbReference>
<dbReference type="SUPFAM" id="SSF50104">
    <property type="entry name" value="Translation proteins SH3-like domain"/>
    <property type="match status" value="1"/>
</dbReference>
<dbReference type="PROSITE" id="PS00302">
    <property type="entry name" value="IF5A_HYPUSINE"/>
    <property type="match status" value="1"/>
</dbReference>
<comment type="function">
    <text evidence="1 3">Translation factor that promotes translation elongation and termination, particularly upon ribosome stalling at specific amino acid sequence contexts (By similarity). Binds between the exit (E) and peptidyl (P) site of the ribosome and promotes rescue of stalled ribosome: specifically required for efficient translation of polyproline-containing peptides as well as other motifs that stall the ribosome (By similarity). Acts as a ribosome quality control (RQC) cofactor by joining the RQC complex to facilitate peptidyl transfer during CAT tailing step (By similarity). Acts in somatic tissues and its function in the soma is essential for normal growth and reproduction (PubMed:15003625).</text>
</comment>
<comment type="subcellular location">
    <subcellularLocation>
        <location evidence="1">Cytoplasm</location>
    </subcellularLocation>
</comment>
<comment type="tissue specificity">
    <text evidence="3">Expressed in the somatic tissues.</text>
</comment>
<comment type="developmental stage">
    <text evidence="3">Expressed throughout development.</text>
</comment>
<comment type="PTM">
    <text evidence="2">Lys-54 undergoes hypusination, a unique post-translational modification that consists in the addition of a butylamino group from spermidine to lysine side chain and leads to the formation of a hypusine residue. eIF-5As are the only known proteins to undergo this modification, which is essential for their function.</text>
</comment>
<comment type="similarity">
    <text evidence="4">Belongs to the eIF-5A family.</text>
</comment>